<protein>
    <recommendedName>
        <fullName>Proline-rich protein 9</fullName>
    </recommendedName>
</protein>
<name>PRR9_MOUSE</name>
<organism>
    <name type="scientific">Mus musculus</name>
    <name type="common">Mouse</name>
    <dbReference type="NCBI Taxonomy" id="10090"/>
    <lineage>
        <taxon>Eukaryota</taxon>
        <taxon>Metazoa</taxon>
        <taxon>Chordata</taxon>
        <taxon>Craniata</taxon>
        <taxon>Vertebrata</taxon>
        <taxon>Euteleostomi</taxon>
        <taxon>Mammalia</taxon>
        <taxon>Eutheria</taxon>
        <taxon>Euarchontoglires</taxon>
        <taxon>Glires</taxon>
        <taxon>Rodentia</taxon>
        <taxon>Myomorpha</taxon>
        <taxon>Muroidea</taxon>
        <taxon>Muridae</taxon>
        <taxon>Murinae</taxon>
        <taxon>Mus</taxon>
        <taxon>Mus</taxon>
    </lineage>
</organism>
<gene>
    <name type="primary">Prr9</name>
</gene>
<reference key="1">
    <citation type="journal article" date="2005" name="Science">
        <title>The transcriptional landscape of the mammalian genome.</title>
        <authorList>
            <person name="Carninci P."/>
            <person name="Kasukawa T."/>
            <person name="Katayama S."/>
            <person name="Gough J."/>
            <person name="Frith M.C."/>
            <person name="Maeda N."/>
            <person name="Oyama R."/>
            <person name="Ravasi T."/>
            <person name="Lenhard B."/>
            <person name="Wells C."/>
            <person name="Kodzius R."/>
            <person name="Shimokawa K."/>
            <person name="Bajic V.B."/>
            <person name="Brenner S.E."/>
            <person name="Batalov S."/>
            <person name="Forrest A.R."/>
            <person name="Zavolan M."/>
            <person name="Davis M.J."/>
            <person name="Wilming L.G."/>
            <person name="Aidinis V."/>
            <person name="Allen J.E."/>
            <person name="Ambesi-Impiombato A."/>
            <person name="Apweiler R."/>
            <person name="Aturaliya R.N."/>
            <person name="Bailey T.L."/>
            <person name="Bansal M."/>
            <person name="Baxter L."/>
            <person name="Beisel K.W."/>
            <person name="Bersano T."/>
            <person name="Bono H."/>
            <person name="Chalk A.M."/>
            <person name="Chiu K.P."/>
            <person name="Choudhary V."/>
            <person name="Christoffels A."/>
            <person name="Clutterbuck D.R."/>
            <person name="Crowe M.L."/>
            <person name="Dalla E."/>
            <person name="Dalrymple B.P."/>
            <person name="de Bono B."/>
            <person name="Della Gatta G."/>
            <person name="di Bernardo D."/>
            <person name="Down T."/>
            <person name="Engstrom P."/>
            <person name="Fagiolini M."/>
            <person name="Faulkner G."/>
            <person name="Fletcher C.F."/>
            <person name="Fukushima T."/>
            <person name="Furuno M."/>
            <person name="Futaki S."/>
            <person name="Gariboldi M."/>
            <person name="Georgii-Hemming P."/>
            <person name="Gingeras T.R."/>
            <person name="Gojobori T."/>
            <person name="Green R.E."/>
            <person name="Gustincich S."/>
            <person name="Harbers M."/>
            <person name="Hayashi Y."/>
            <person name="Hensch T.K."/>
            <person name="Hirokawa N."/>
            <person name="Hill D."/>
            <person name="Huminiecki L."/>
            <person name="Iacono M."/>
            <person name="Ikeo K."/>
            <person name="Iwama A."/>
            <person name="Ishikawa T."/>
            <person name="Jakt M."/>
            <person name="Kanapin A."/>
            <person name="Katoh M."/>
            <person name="Kawasawa Y."/>
            <person name="Kelso J."/>
            <person name="Kitamura H."/>
            <person name="Kitano H."/>
            <person name="Kollias G."/>
            <person name="Krishnan S.P."/>
            <person name="Kruger A."/>
            <person name="Kummerfeld S.K."/>
            <person name="Kurochkin I.V."/>
            <person name="Lareau L.F."/>
            <person name="Lazarevic D."/>
            <person name="Lipovich L."/>
            <person name="Liu J."/>
            <person name="Liuni S."/>
            <person name="McWilliam S."/>
            <person name="Madan Babu M."/>
            <person name="Madera M."/>
            <person name="Marchionni L."/>
            <person name="Matsuda H."/>
            <person name="Matsuzawa S."/>
            <person name="Miki H."/>
            <person name="Mignone F."/>
            <person name="Miyake S."/>
            <person name="Morris K."/>
            <person name="Mottagui-Tabar S."/>
            <person name="Mulder N."/>
            <person name="Nakano N."/>
            <person name="Nakauchi H."/>
            <person name="Ng P."/>
            <person name="Nilsson R."/>
            <person name="Nishiguchi S."/>
            <person name="Nishikawa S."/>
            <person name="Nori F."/>
            <person name="Ohara O."/>
            <person name="Okazaki Y."/>
            <person name="Orlando V."/>
            <person name="Pang K.C."/>
            <person name="Pavan W.J."/>
            <person name="Pavesi G."/>
            <person name="Pesole G."/>
            <person name="Petrovsky N."/>
            <person name="Piazza S."/>
            <person name="Reed J."/>
            <person name="Reid J.F."/>
            <person name="Ring B.Z."/>
            <person name="Ringwald M."/>
            <person name="Rost B."/>
            <person name="Ruan Y."/>
            <person name="Salzberg S.L."/>
            <person name="Sandelin A."/>
            <person name="Schneider C."/>
            <person name="Schoenbach C."/>
            <person name="Sekiguchi K."/>
            <person name="Semple C.A."/>
            <person name="Seno S."/>
            <person name="Sessa L."/>
            <person name="Sheng Y."/>
            <person name="Shibata Y."/>
            <person name="Shimada H."/>
            <person name="Shimada K."/>
            <person name="Silva D."/>
            <person name="Sinclair B."/>
            <person name="Sperling S."/>
            <person name="Stupka E."/>
            <person name="Sugiura K."/>
            <person name="Sultana R."/>
            <person name="Takenaka Y."/>
            <person name="Taki K."/>
            <person name="Tammoja K."/>
            <person name="Tan S.L."/>
            <person name="Tang S."/>
            <person name="Taylor M.S."/>
            <person name="Tegner J."/>
            <person name="Teichmann S.A."/>
            <person name="Ueda H.R."/>
            <person name="van Nimwegen E."/>
            <person name="Verardo R."/>
            <person name="Wei C.L."/>
            <person name="Yagi K."/>
            <person name="Yamanishi H."/>
            <person name="Zabarovsky E."/>
            <person name="Zhu S."/>
            <person name="Zimmer A."/>
            <person name="Hide W."/>
            <person name="Bult C."/>
            <person name="Grimmond S.M."/>
            <person name="Teasdale R.D."/>
            <person name="Liu E.T."/>
            <person name="Brusic V."/>
            <person name="Quackenbush J."/>
            <person name="Wahlestedt C."/>
            <person name="Mattick J.S."/>
            <person name="Hume D.A."/>
            <person name="Kai C."/>
            <person name="Sasaki D."/>
            <person name="Tomaru Y."/>
            <person name="Fukuda S."/>
            <person name="Kanamori-Katayama M."/>
            <person name="Suzuki M."/>
            <person name="Aoki J."/>
            <person name="Arakawa T."/>
            <person name="Iida J."/>
            <person name="Imamura K."/>
            <person name="Itoh M."/>
            <person name="Kato T."/>
            <person name="Kawaji H."/>
            <person name="Kawagashira N."/>
            <person name="Kawashima T."/>
            <person name="Kojima M."/>
            <person name="Kondo S."/>
            <person name="Konno H."/>
            <person name="Nakano K."/>
            <person name="Ninomiya N."/>
            <person name="Nishio T."/>
            <person name="Okada M."/>
            <person name="Plessy C."/>
            <person name="Shibata K."/>
            <person name="Shiraki T."/>
            <person name="Suzuki S."/>
            <person name="Tagami M."/>
            <person name="Waki K."/>
            <person name="Watahiki A."/>
            <person name="Okamura-Oho Y."/>
            <person name="Suzuki H."/>
            <person name="Kawai J."/>
            <person name="Hayashizaki Y."/>
        </authorList>
    </citation>
    <scope>NUCLEOTIDE SEQUENCE [LARGE SCALE MRNA]</scope>
    <source>
        <strain>C57BL/6J</strain>
        <tissue>Skin</tissue>
    </source>
</reference>
<proteinExistence type="predicted"/>
<keyword id="KW-1185">Reference proteome</keyword>
<accession>Q8BV84</accession>
<dbReference type="EMBL" id="AK079463">
    <property type="protein sequence ID" value="BAC37655.1"/>
    <property type="molecule type" value="mRNA"/>
</dbReference>
<dbReference type="CCDS" id="CCDS38508.1"/>
<dbReference type="RefSeq" id="NP_780633.1">
    <property type="nucleotide sequence ID" value="NM_175424.3"/>
</dbReference>
<dbReference type="STRING" id="10090.ENSMUSP00000068470"/>
<dbReference type="PaxDb" id="10090-ENSMUSP00000068470"/>
<dbReference type="ProteomicsDB" id="291671"/>
<dbReference type="Antibodypedia" id="50370">
    <property type="antibodies" value="8 antibodies from 7 providers"/>
</dbReference>
<dbReference type="DNASU" id="109314"/>
<dbReference type="Ensembl" id="ENSMUST00000070284.4">
    <property type="protein sequence ID" value="ENSMUSP00000068470.4"/>
    <property type="gene ID" value="ENSMUSG00000056270.4"/>
</dbReference>
<dbReference type="GeneID" id="109314"/>
<dbReference type="KEGG" id="mmu:109314"/>
<dbReference type="UCSC" id="uc008qdm.1">
    <property type="organism name" value="mouse"/>
</dbReference>
<dbReference type="AGR" id="MGI:1925680"/>
<dbReference type="CTD" id="574414"/>
<dbReference type="MGI" id="MGI:1925680">
    <property type="gene designation" value="Prr9"/>
</dbReference>
<dbReference type="VEuPathDB" id="HostDB:ENSMUSG00000056270"/>
<dbReference type="eggNOG" id="ENOG502TDD1">
    <property type="taxonomic scope" value="Eukaryota"/>
</dbReference>
<dbReference type="GeneTree" id="ENSGT00700000104637"/>
<dbReference type="HOGENOM" id="CLU_136290_0_0_1"/>
<dbReference type="InParanoid" id="Q8BV84"/>
<dbReference type="OMA" id="SFNEQQC"/>
<dbReference type="OrthoDB" id="9835460at2759"/>
<dbReference type="PhylomeDB" id="Q8BV84"/>
<dbReference type="TreeFam" id="TF339356"/>
<dbReference type="BioGRID-ORCS" id="109314">
    <property type="hits" value="4 hits in 76 CRISPR screens"/>
</dbReference>
<dbReference type="PRO" id="PR:Q8BV84"/>
<dbReference type="Proteomes" id="UP000000589">
    <property type="component" value="Chromosome 3"/>
</dbReference>
<dbReference type="RNAct" id="Q8BV84">
    <property type="molecule type" value="protein"/>
</dbReference>
<dbReference type="Bgee" id="ENSMUSG00000056270">
    <property type="expression patterns" value="Expressed in tail skin and 37 other cell types or tissues"/>
</dbReference>
<dbReference type="InterPro" id="IPR052888">
    <property type="entry name" value="PRR9"/>
</dbReference>
<dbReference type="PANTHER" id="PTHR48427">
    <property type="entry name" value="PROLINE-RICH PROTEIN 9"/>
    <property type="match status" value="1"/>
</dbReference>
<dbReference type="PANTHER" id="PTHR48427:SF1">
    <property type="entry name" value="PROLINE-RICH PROTEIN 9"/>
    <property type="match status" value="1"/>
</dbReference>
<dbReference type="PRINTS" id="PR00021">
    <property type="entry name" value="PRORICH"/>
</dbReference>
<sequence length="116" mass="12797">MSFNDQQCKQPCVPPPCLQKTQEKCQAQAEDVCVSSCQDPCQDKCPQQAQEVCVSQCQELSQGNCPQQGQDPCLPPSQDQCLPQCAEPCQELAQTKCVEEFPQKVQEKCSSQSKGK</sequence>
<feature type="chain" id="PRO_0000334689" description="Proline-rich protein 9">
    <location>
        <begin position="1"/>
        <end position="116"/>
    </location>
</feature>